<dbReference type="EC" id="2.1.2.9" evidence="1"/>
<dbReference type="EMBL" id="CP000446">
    <property type="protein sequence ID" value="ABI37110.1"/>
    <property type="molecule type" value="Genomic_DNA"/>
</dbReference>
<dbReference type="RefSeq" id="WP_011620864.1">
    <property type="nucleotide sequence ID" value="NC_008321.1"/>
</dbReference>
<dbReference type="SMR" id="Q0HPA7"/>
<dbReference type="KEGG" id="she:Shewmr4_0028"/>
<dbReference type="HOGENOM" id="CLU_033347_1_2_6"/>
<dbReference type="GO" id="GO:0005829">
    <property type="term" value="C:cytosol"/>
    <property type="evidence" value="ECO:0007669"/>
    <property type="project" value="TreeGrafter"/>
</dbReference>
<dbReference type="GO" id="GO:0004479">
    <property type="term" value="F:methionyl-tRNA formyltransferase activity"/>
    <property type="evidence" value="ECO:0007669"/>
    <property type="project" value="UniProtKB-UniRule"/>
</dbReference>
<dbReference type="CDD" id="cd08646">
    <property type="entry name" value="FMT_core_Met-tRNA-FMT_N"/>
    <property type="match status" value="1"/>
</dbReference>
<dbReference type="CDD" id="cd08704">
    <property type="entry name" value="Met_tRNA_FMT_C"/>
    <property type="match status" value="1"/>
</dbReference>
<dbReference type="FunFam" id="3.10.25.10:FF:000001">
    <property type="entry name" value="Methionyl-tRNA formyltransferase"/>
    <property type="match status" value="1"/>
</dbReference>
<dbReference type="FunFam" id="3.40.50.170:FF:000003">
    <property type="entry name" value="Methionyl-tRNA formyltransferase"/>
    <property type="match status" value="1"/>
</dbReference>
<dbReference type="Gene3D" id="3.10.25.10">
    <property type="entry name" value="Formyl transferase, C-terminal domain"/>
    <property type="match status" value="1"/>
</dbReference>
<dbReference type="Gene3D" id="3.40.50.170">
    <property type="entry name" value="Formyl transferase, N-terminal domain"/>
    <property type="match status" value="1"/>
</dbReference>
<dbReference type="HAMAP" id="MF_00182">
    <property type="entry name" value="Formyl_trans"/>
    <property type="match status" value="1"/>
</dbReference>
<dbReference type="InterPro" id="IPR005794">
    <property type="entry name" value="Fmt"/>
</dbReference>
<dbReference type="InterPro" id="IPR005793">
    <property type="entry name" value="Formyl_trans_C"/>
</dbReference>
<dbReference type="InterPro" id="IPR037022">
    <property type="entry name" value="Formyl_trans_C_sf"/>
</dbReference>
<dbReference type="InterPro" id="IPR002376">
    <property type="entry name" value="Formyl_transf_N"/>
</dbReference>
<dbReference type="InterPro" id="IPR036477">
    <property type="entry name" value="Formyl_transf_N_sf"/>
</dbReference>
<dbReference type="InterPro" id="IPR011034">
    <property type="entry name" value="Formyl_transferase-like_C_sf"/>
</dbReference>
<dbReference type="InterPro" id="IPR001555">
    <property type="entry name" value="GART_AS"/>
</dbReference>
<dbReference type="InterPro" id="IPR044135">
    <property type="entry name" value="Met-tRNA-FMT_C"/>
</dbReference>
<dbReference type="InterPro" id="IPR041711">
    <property type="entry name" value="Met-tRNA-FMT_N"/>
</dbReference>
<dbReference type="NCBIfam" id="TIGR00460">
    <property type="entry name" value="fmt"/>
    <property type="match status" value="1"/>
</dbReference>
<dbReference type="PANTHER" id="PTHR11138">
    <property type="entry name" value="METHIONYL-TRNA FORMYLTRANSFERASE"/>
    <property type="match status" value="1"/>
</dbReference>
<dbReference type="PANTHER" id="PTHR11138:SF5">
    <property type="entry name" value="METHIONYL-TRNA FORMYLTRANSFERASE, MITOCHONDRIAL"/>
    <property type="match status" value="1"/>
</dbReference>
<dbReference type="Pfam" id="PF02911">
    <property type="entry name" value="Formyl_trans_C"/>
    <property type="match status" value="1"/>
</dbReference>
<dbReference type="Pfam" id="PF00551">
    <property type="entry name" value="Formyl_trans_N"/>
    <property type="match status" value="1"/>
</dbReference>
<dbReference type="SUPFAM" id="SSF50486">
    <property type="entry name" value="FMT C-terminal domain-like"/>
    <property type="match status" value="1"/>
</dbReference>
<dbReference type="SUPFAM" id="SSF53328">
    <property type="entry name" value="Formyltransferase"/>
    <property type="match status" value="1"/>
</dbReference>
<dbReference type="PROSITE" id="PS00373">
    <property type="entry name" value="GART"/>
    <property type="match status" value="1"/>
</dbReference>
<sequence>MKPLNIIFAGTPDFAARHLQALINSHHNVIAVYTQPDRPAGRGKKLTASPVKELAVSHNIPVYQPGSLRKEPAQQELAALNADIMVVVAYGLILPKVVLDTPRLGCINVHGSILPRWRGAAPIQRALWAGDKETGVTIMQMDVGLDTGDMLLKTYLPIEDDDTSATLYEKLALQGPDALLQALEGLANGTLTAEKQDEALANYAEKLSKEEARLDWSKSATQLWQEVRAFNPWPVSYFEHQGNTIKVWQTQVSTTSSNAAPGTIISASKKGIEVATGDGVLTLLSMQLPGKKPLSVADILNARGDWFTPNTRLNHEAQ</sequence>
<comment type="function">
    <text evidence="1">Attaches a formyl group to the free amino group of methionyl-tRNA(fMet). The formyl group appears to play a dual role in the initiator identity of N-formylmethionyl-tRNA by promoting its recognition by IF2 and preventing the misappropriation of this tRNA by the elongation apparatus.</text>
</comment>
<comment type="catalytic activity">
    <reaction evidence="1">
        <text>L-methionyl-tRNA(fMet) + (6R)-10-formyltetrahydrofolate = N-formyl-L-methionyl-tRNA(fMet) + (6S)-5,6,7,8-tetrahydrofolate + H(+)</text>
        <dbReference type="Rhea" id="RHEA:24380"/>
        <dbReference type="Rhea" id="RHEA-COMP:9952"/>
        <dbReference type="Rhea" id="RHEA-COMP:9953"/>
        <dbReference type="ChEBI" id="CHEBI:15378"/>
        <dbReference type="ChEBI" id="CHEBI:57453"/>
        <dbReference type="ChEBI" id="CHEBI:78530"/>
        <dbReference type="ChEBI" id="CHEBI:78844"/>
        <dbReference type="ChEBI" id="CHEBI:195366"/>
        <dbReference type="EC" id="2.1.2.9"/>
    </reaction>
</comment>
<comment type="similarity">
    <text evidence="1">Belongs to the Fmt family.</text>
</comment>
<feature type="chain" id="PRO_1000020159" description="Methionyl-tRNA formyltransferase">
    <location>
        <begin position="1"/>
        <end position="318"/>
    </location>
</feature>
<feature type="binding site" evidence="1">
    <location>
        <begin position="112"/>
        <end position="115"/>
    </location>
    <ligand>
        <name>(6S)-5,6,7,8-tetrahydrofolate</name>
        <dbReference type="ChEBI" id="CHEBI:57453"/>
    </ligand>
</feature>
<protein>
    <recommendedName>
        <fullName evidence="1">Methionyl-tRNA formyltransferase</fullName>
        <ecNumber evidence="1">2.1.2.9</ecNumber>
    </recommendedName>
</protein>
<proteinExistence type="inferred from homology"/>
<name>FMT_SHESM</name>
<evidence type="ECO:0000255" key="1">
    <source>
        <dbReference type="HAMAP-Rule" id="MF_00182"/>
    </source>
</evidence>
<gene>
    <name evidence="1" type="primary">fmt</name>
    <name type="ordered locus">Shewmr4_0028</name>
</gene>
<keyword id="KW-0648">Protein biosynthesis</keyword>
<keyword id="KW-0808">Transferase</keyword>
<organism>
    <name type="scientific">Shewanella sp. (strain MR-4)</name>
    <dbReference type="NCBI Taxonomy" id="60480"/>
    <lineage>
        <taxon>Bacteria</taxon>
        <taxon>Pseudomonadati</taxon>
        <taxon>Pseudomonadota</taxon>
        <taxon>Gammaproteobacteria</taxon>
        <taxon>Alteromonadales</taxon>
        <taxon>Shewanellaceae</taxon>
        <taxon>Shewanella</taxon>
    </lineage>
</organism>
<reference key="1">
    <citation type="submission" date="2006-08" db="EMBL/GenBank/DDBJ databases">
        <title>Complete sequence of Shewanella sp. MR-4.</title>
        <authorList>
            <consortium name="US DOE Joint Genome Institute"/>
            <person name="Copeland A."/>
            <person name="Lucas S."/>
            <person name="Lapidus A."/>
            <person name="Barry K."/>
            <person name="Detter J.C."/>
            <person name="Glavina del Rio T."/>
            <person name="Hammon N."/>
            <person name="Israni S."/>
            <person name="Dalin E."/>
            <person name="Tice H."/>
            <person name="Pitluck S."/>
            <person name="Kiss H."/>
            <person name="Brettin T."/>
            <person name="Bruce D."/>
            <person name="Han C."/>
            <person name="Tapia R."/>
            <person name="Gilna P."/>
            <person name="Schmutz J."/>
            <person name="Larimer F."/>
            <person name="Land M."/>
            <person name="Hauser L."/>
            <person name="Kyrpides N."/>
            <person name="Mikhailova N."/>
            <person name="Nealson K."/>
            <person name="Konstantinidis K."/>
            <person name="Klappenbach J."/>
            <person name="Tiedje J."/>
            <person name="Richardson P."/>
        </authorList>
    </citation>
    <scope>NUCLEOTIDE SEQUENCE [LARGE SCALE GENOMIC DNA]</scope>
    <source>
        <strain>MR-4</strain>
    </source>
</reference>
<accession>Q0HPA7</accession>